<feature type="chain" id="PRO_1000021265" description="Shikimate dehydrogenase (NADP(+))">
    <location>
        <begin position="1"/>
        <end position="294"/>
    </location>
</feature>
<feature type="active site" description="Proton acceptor" evidence="1">
    <location>
        <position position="65"/>
    </location>
</feature>
<feature type="binding site" evidence="1">
    <location>
        <begin position="14"/>
        <end position="16"/>
    </location>
    <ligand>
        <name>shikimate</name>
        <dbReference type="ChEBI" id="CHEBI:36208"/>
    </ligand>
</feature>
<feature type="binding site" evidence="1">
    <location>
        <position position="61"/>
    </location>
    <ligand>
        <name>shikimate</name>
        <dbReference type="ChEBI" id="CHEBI:36208"/>
    </ligand>
</feature>
<feature type="binding site" evidence="1">
    <location>
        <position position="77"/>
    </location>
    <ligand>
        <name>NADP(+)</name>
        <dbReference type="ChEBI" id="CHEBI:58349"/>
    </ligand>
</feature>
<feature type="binding site" evidence="1">
    <location>
        <position position="86"/>
    </location>
    <ligand>
        <name>shikimate</name>
        <dbReference type="ChEBI" id="CHEBI:36208"/>
    </ligand>
</feature>
<feature type="binding site" evidence="1">
    <location>
        <position position="102"/>
    </location>
    <ligand>
        <name>shikimate</name>
        <dbReference type="ChEBI" id="CHEBI:36208"/>
    </ligand>
</feature>
<feature type="binding site" evidence="1">
    <location>
        <begin position="140"/>
        <end position="144"/>
    </location>
    <ligand>
        <name>NADP(+)</name>
        <dbReference type="ChEBI" id="CHEBI:58349"/>
    </ligand>
</feature>
<feature type="binding site" evidence="1">
    <location>
        <position position="235"/>
    </location>
    <ligand>
        <name>NADP(+)</name>
        <dbReference type="ChEBI" id="CHEBI:58349"/>
    </ligand>
</feature>
<feature type="binding site" evidence="1">
    <location>
        <position position="237"/>
    </location>
    <ligand>
        <name>shikimate</name>
        <dbReference type="ChEBI" id="CHEBI:36208"/>
    </ligand>
</feature>
<feature type="binding site" evidence="1">
    <location>
        <position position="259"/>
    </location>
    <ligand>
        <name>NADP(+)</name>
        <dbReference type="ChEBI" id="CHEBI:58349"/>
    </ligand>
</feature>
<dbReference type="EC" id="1.1.1.25" evidence="1"/>
<dbReference type="EMBL" id="BX248583">
    <property type="protein sequence ID" value="CAD83736.1"/>
    <property type="molecule type" value="Genomic_DNA"/>
</dbReference>
<dbReference type="SMR" id="Q7VQB8"/>
<dbReference type="STRING" id="203907.Bfl221"/>
<dbReference type="KEGG" id="bfl:Bfl221"/>
<dbReference type="eggNOG" id="COG0169">
    <property type="taxonomic scope" value="Bacteria"/>
</dbReference>
<dbReference type="HOGENOM" id="CLU_044063_2_1_6"/>
<dbReference type="OrthoDB" id="9776868at2"/>
<dbReference type="UniPathway" id="UPA00053">
    <property type="reaction ID" value="UER00087"/>
</dbReference>
<dbReference type="Proteomes" id="UP000002192">
    <property type="component" value="Chromosome"/>
</dbReference>
<dbReference type="GO" id="GO:0005829">
    <property type="term" value="C:cytosol"/>
    <property type="evidence" value="ECO:0007669"/>
    <property type="project" value="TreeGrafter"/>
</dbReference>
<dbReference type="GO" id="GO:0050661">
    <property type="term" value="F:NADP binding"/>
    <property type="evidence" value="ECO:0007669"/>
    <property type="project" value="InterPro"/>
</dbReference>
<dbReference type="GO" id="GO:0004764">
    <property type="term" value="F:shikimate 3-dehydrogenase (NADP+) activity"/>
    <property type="evidence" value="ECO:0007669"/>
    <property type="project" value="UniProtKB-UniRule"/>
</dbReference>
<dbReference type="GO" id="GO:0008652">
    <property type="term" value="P:amino acid biosynthetic process"/>
    <property type="evidence" value="ECO:0007669"/>
    <property type="project" value="UniProtKB-KW"/>
</dbReference>
<dbReference type="GO" id="GO:0009073">
    <property type="term" value="P:aromatic amino acid family biosynthetic process"/>
    <property type="evidence" value="ECO:0007669"/>
    <property type="project" value="UniProtKB-KW"/>
</dbReference>
<dbReference type="GO" id="GO:0009423">
    <property type="term" value="P:chorismate biosynthetic process"/>
    <property type="evidence" value="ECO:0007669"/>
    <property type="project" value="UniProtKB-UniRule"/>
</dbReference>
<dbReference type="GO" id="GO:0019632">
    <property type="term" value="P:shikimate metabolic process"/>
    <property type="evidence" value="ECO:0007669"/>
    <property type="project" value="InterPro"/>
</dbReference>
<dbReference type="CDD" id="cd01065">
    <property type="entry name" value="NAD_bind_Shikimate_DH"/>
    <property type="match status" value="1"/>
</dbReference>
<dbReference type="Gene3D" id="3.40.50.10860">
    <property type="entry name" value="Leucine Dehydrogenase, chain A, domain 1"/>
    <property type="match status" value="1"/>
</dbReference>
<dbReference type="Gene3D" id="3.40.50.720">
    <property type="entry name" value="NAD(P)-binding Rossmann-like Domain"/>
    <property type="match status" value="1"/>
</dbReference>
<dbReference type="HAMAP" id="MF_00222">
    <property type="entry name" value="Shikimate_DH_AroE"/>
    <property type="match status" value="1"/>
</dbReference>
<dbReference type="InterPro" id="IPR046346">
    <property type="entry name" value="Aminoacid_DH-like_N_sf"/>
</dbReference>
<dbReference type="InterPro" id="IPR036291">
    <property type="entry name" value="NAD(P)-bd_dom_sf"/>
</dbReference>
<dbReference type="InterPro" id="IPR041121">
    <property type="entry name" value="SDH_C"/>
</dbReference>
<dbReference type="InterPro" id="IPR011342">
    <property type="entry name" value="Shikimate_DH"/>
</dbReference>
<dbReference type="InterPro" id="IPR013708">
    <property type="entry name" value="Shikimate_DH-bd_N"/>
</dbReference>
<dbReference type="InterPro" id="IPR022893">
    <property type="entry name" value="Shikimate_DH_fam"/>
</dbReference>
<dbReference type="InterPro" id="IPR006151">
    <property type="entry name" value="Shikm_DH/Glu-tRNA_Rdtase"/>
</dbReference>
<dbReference type="NCBIfam" id="TIGR00507">
    <property type="entry name" value="aroE"/>
    <property type="match status" value="1"/>
</dbReference>
<dbReference type="NCBIfam" id="NF001310">
    <property type="entry name" value="PRK00258.1-2"/>
    <property type="match status" value="1"/>
</dbReference>
<dbReference type="PANTHER" id="PTHR21089:SF1">
    <property type="entry name" value="BIFUNCTIONAL 3-DEHYDROQUINATE DEHYDRATASE_SHIKIMATE DEHYDROGENASE, CHLOROPLASTIC"/>
    <property type="match status" value="1"/>
</dbReference>
<dbReference type="PANTHER" id="PTHR21089">
    <property type="entry name" value="SHIKIMATE DEHYDROGENASE"/>
    <property type="match status" value="1"/>
</dbReference>
<dbReference type="Pfam" id="PF18317">
    <property type="entry name" value="SDH_C"/>
    <property type="match status" value="1"/>
</dbReference>
<dbReference type="Pfam" id="PF01488">
    <property type="entry name" value="Shikimate_DH"/>
    <property type="match status" value="1"/>
</dbReference>
<dbReference type="Pfam" id="PF08501">
    <property type="entry name" value="Shikimate_dh_N"/>
    <property type="match status" value="1"/>
</dbReference>
<dbReference type="SUPFAM" id="SSF53223">
    <property type="entry name" value="Aminoacid dehydrogenase-like, N-terminal domain"/>
    <property type="match status" value="1"/>
</dbReference>
<dbReference type="SUPFAM" id="SSF51735">
    <property type="entry name" value="NAD(P)-binding Rossmann-fold domains"/>
    <property type="match status" value="1"/>
</dbReference>
<accession>Q7VQB8</accession>
<keyword id="KW-0028">Amino-acid biosynthesis</keyword>
<keyword id="KW-0057">Aromatic amino acid biosynthesis</keyword>
<keyword id="KW-0521">NADP</keyword>
<keyword id="KW-0560">Oxidoreductase</keyword>
<keyword id="KW-1185">Reference proteome</keyword>
<comment type="function">
    <text evidence="1">Involved in the biosynthesis of the chorismate, which leads to the biosynthesis of aromatic amino acids. Catalyzes the reversible NADPH linked reduction of 3-dehydroshikimate (DHSA) to yield shikimate (SA).</text>
</comment>
<comment type="catalytic activity">
    <reaction evidence="1">
        <text>shikimate + NADP(+) = 3-dehydroshikimate + NADPH + H(+)</text>
        <dbReference type="Rhea" id="RHEA:17737"/>
        <dbReference type="ChEBI" id="CHEBI:15378"/>
        <dbReference type="ChEBI" id="CHEBI:16630"/>
        <dbReference type="ChEBI" id="CHEBI:36208"/>
        <dbReference type="ChEBI" id="CHEBI:57783"/>
        <dbReference type="ChEBI" id="CHEBI:58349"/>
        <dbReference type="EC" id="1.1.1.25"/>
    </reaction>
</comment>
<comment type="pathway">
    <text evidence="1">Metabolic intermediate biosynthesis; chorismate biosynthesis; chorismate from D-erythrose 4-phosphate and phosphoenolpyruvate: step 4/7.</text>
</comment>
<comment type="subunit">
    <text evidence="1">Homodimer.</text>
</comment>
<comment type="similarity">
    <text evidence="1">Belongs to the shikimate dehydrogenase family.</text>
</comment>
<gene>
    <name evidence="1" type="primary">aroE</name>
    <name type="ordered locus">Bfl221</name>
</gene>
<organism>
    <name type="scientific">Blochmanniella floridana</name>
    <dbReference type="NCBI Taxonomy" id="203907"/>
    <lineage>
        <taxon>Bacteria</taxon>
        <taxon>Pseudomonadati</taxon>
        <taxon>Pseudomonadota</taxon>
        <taxon>Gammaproteobacteria</taxon>
        <taxon>Enterobacterales</taxon>
        <taxon>Enterobacteriaceae</taxon>
        <taxon>ant endosymbionts</taxon>
        <taxon>Candidatus Blochmanniella</taxon>
    </lineage>
</organism>
<reference key="1">
    <citation type="journal article" date="2003" name="Proc. Natl. Acad. Sci. U.S.A.">
        <title>The genome sequence of Blochmannia floridanus: comparative analysis of reduced genomes.</title>
        <authorList>
            <person name="Gil R."/>
            <person name="Silva F.J."/>
            <person name="Zientz E."/>
            <person name="Delmotte F."/>
            <person name="Gonzalez-Candelas F."/>
            <person name="Latorre A."/>
            <person name="Rausell C."/>
            <person name="Kamerbeek J."/>
            <person name="Gadau J."/>
            <person name="Hoelldobler B."/>
            <person name="van Ham R.C.H.J."/>
            <person name="Gross R."/>
            <person name="Moya A."/>
        </authorList>
    </citation>
    <scope>NUCLEOTIDE SEQUENCE [LARGE SCALE GENOMIC DNA]</scope>
</reference>
<evidence type="ECO:0000255" key="1">
    <source>
        <dbReference type="HAMAP-Rule" id="MF_00222"/>
    </source>
</evidence>
<sequence length="294" mass="32923">MSSFAIFGNPVSHSKSPKIYSMFANEFGMCGEYDLKVASDDNFYNLLYQFFDMGGFGANITVPFKKRAFLLCDNLTDRSILSSTVNTIKKQLDGTLLGDNTDGIGLINDLKRLNWISIDNAFIDMTCNNIQETANILLIGSGGAAQSIIPVLLDIKKCCVNIINRTFFNAQRLVQYYHSIGRQNISCIDLNNLLCEKNACKKYDLIINASSSSMNNDLPCISSFLITPFTKCYDLFYGNQDTIFVKWCKKNGSNYCVDGLGMLIEQAAYAFYLWHGKKPSVPIVLNAFRSELCK</sequence>
<proteinExistence type="inferred from homology"/>
<protein>
    <recommendedName>
        <fullName evidence="1">Shikimate dehydrogenase (NADP(+))</fullName>
        <shortName evidence="1">SDH</shortName>
        <ecNumber evidence="1">1.1.1.25</ecNumber>
    </recommendedName>
</protein>
<name>AROE_BLOFL</name>